<protein>
    <recommendedName>
        <fullName evidence="1">Flagellar hook-basal body complex protein FliE</fullName>
    </recommendedName>
</protein>
<comment type="subcellular location">
    <subcellularLocation>
        <location evidence="1">Bacterial flagellum basal body</location>
    </subcellularLocation>
</comment>
<comment type="similarity">
    <text evidence="1">Belongs to the FliE family.</text>
</comment>
<proteinExistence type="inferred from homology"/>
<organism>
    <name type="scientific">Helicobacter pylori (strain Shi470)</name>
    <dbReference type="NCBI Taxonomy" id="512562"/>
    <lineage>
        <taxon>Bacteria</taxon>
        <taxon>Pseudomonadati</taxon>
        <taxon>Campylobacterota</taxon>
        <taxon>Epsilonproteobacteria</taxon>
        <taxon>Campylobacterales</taxon>
        <taxon>Helicobacteraceae</taxon>
        <taxon>Helicobacter</taxon>
    </lineage>
</organism>
<accession>B2UVX4</accession>
<keyword id="KW-0975">Bacterial flagellum</keyword>
<gene>
    <name evidence="1" type="primary">fliE</name>
    <name type="ordered locus">HPSH_08115</name>
</gene>
<feature type="chain" id="PRO_1000132663" description="Flagellar hook-basal body complex protein FliE">
    <location>
        <begin position="1"/>
        <end position="109"/>
    </location>
</feature>
<feature type="region of interest" description="Disordered" evidence="2">
    <location>
        <begin position="1"/>
        <end position="38"/>
    </location>
</feature>
<feature type="compositionally biased region" description="Basic and acidic residues" evidence="2">
    <location>
        <begin position="19"/>
        <end position="38"/>
    </location>
</feature>
<dbReference type="EMBL" id="CP001072">
    <property type="protein sequence ID" value="ACD49006.1"/>
    <property type="molecule type" value="Genomic_DNA"/>
</dbReference>
<dbReference type="RefSeq" id="WP_001147918.1">
    <property type="nucleotide sequence ID" value="NC_010698.2"/>
</dbReference>
<dbReference type="SMR" id="B2UVX4"/>
<dbReference type="KEGG" id="hps:HPSH_08115"/>
<dbReference type="HOGENOM" id="CLU_147249_3_1_7"/>
<dbReference type="GO" id="GO:0009425">
    <property type="term" value="C:bacterial-type flagellum basal body"/>
    <property type="evidence" value="ECO:0007669"/>
    <property type="project" value="UniProtKB-SubCell"/>
</dbReference>
<dbReference type="GO" id="GO:0003774">
    <property type="term" value="F:cytoskeletal motor activity"/>
    <property type="evidence" value="ECO:0007669"/>
    <property type="project" value="InterPro"/>
</dbReference>
<dbReference type="GO" id="GO:0005198">
    <property type="term" value="F:structural molecule activity"/>
    <property type="evidence" value="ECO:0007669"/>
    <property type="project" value="InterPro"/>
</dbReference>
<dbReference type="GO" id="GO:0071973">
    <property type="term" value="P:bacterial-type flagellum-dependent cell motility"/>
    <property type="evidence" value="ECO:0007669"/>
    <property type="project" value="InterPro"/>
</dbReference>
<dbReference type="HAMAP" id="MF_00724">
    <property type="entry name" value="FliE"/>
    <property type="match status" value="1"/>
</dbReference>
<dbReference type="InterPro" id="IPR001624">
    <property type="entry name" value="FliE"/>
</dbReference>
<dbReference type="NCBIfam" id="TIGR00205">
    <property type="entry name" value="fliE"/>
    <property type="match status" value="1"/>
</dbReference>
<dbReference type="PANTHER" id="PTHR34653">
    <property type="match status" value="1"/>
</dbReference>
<dbReference type="PANTHER" id="PTHR34653:SF1">
    <property type="entry name" value="FLAGELLAR HOOK-BASAL BODY COMPLEX PROTEIN FLIE"/>
    <property type="match status" value="1"/>
</dbReference>
<dbReference type="Pfam" id="PF02049">
    <property type="entry name" value="FliE"/>
    <property type="match status" value="1"/>
</dbReference>
<dbReference type="PRINTS" id="PR01006">
    <property type="entry name" value="FLGHOOKFLIE"/>
</dbReference>
<sequence>MQAIHNDKSLLSPFSELNTDNRTKREESGSTFKEQKGGEFSKLLKQSINELNNTQEQSDKALADMATGQIKDLHQAAIAIGKAETSMKLMLEVRNKAISAYKELLRTQI</sequence>
<name>FLIE_HELPS</name>
<evidence type="ECO:0000255" key="1">
    <source>
        <dbReference type="HAMAP-Rule" id="MF_00724"/>
    </source>
</evidence>
<evidence type="ECO:0000256" key="2">
    <source>
        <dbReference type="SAM" id="MobiDB-lite"/>
    </source>
</evidence>
<reference key="1">
    <citation type="submission" date="2008-05" db="EMBL/GenBank/DDBJ databases">
        <title>Genome sequence of Helicobacter pylori from the remote Amazon: traces of Asian ancestry of the first Americans.</title>
        <authorList>
            <person name="Kersulyte D."/>
            <person name="Kalia A."/>
            <person name="Gilman R.H."/>
            <person name="Berg D.E."/>
        </authorList>
    </citation>
    <scope>NUCLEOTIDE SEQUENCE [LARGE SCALE GENOMIC DNA]</scope>
    <source>
        <strain>Shi470</strain>
    </source>
</reference>